<accession>Q9BSJ5</accession>
<accession>A8K9X3</accession>
<accession>Q5JB45</accession>
<accession>Q6YAU3</accession>
<accession>Q9H0L9</accession>
<accession>Q9H5E6</accession>
<accession>Q9NWN5</accession>
<comment type="function">
    <text evidence="7">Critical regulator of mitochondrial DNA (mtDNA) abundance (PubMed:37676315). Binds dsDNA throughout the mitochondrial genome without sequence specificity and controls mtDNA copy number by promoting its replication (PubMed:37676315). Also plays important roles in mitochondrial metabolism and cell proliferation (PubMed:37676315).</text>
</comment>
<comment type="interaction">
    <interactant intactId="EBI-2872520">
        <id>Q9BSJ5</id>
    </interactant>
    <interactant intactId="EBI-9641086">
        <id>P21333-2</id>
        <label>FLNA</label>
    </interactant>
    <organismsDiffer>false</organismsDiffer>
    <experiments>3</experiments>
</comment>
<comment type="interaction">
    <interactant intactId="EBI-2872520">
        <id>Q9BSJ5</id>
    </interactant>
    <interactant intactId="EBI-709754">
        <id>Q9HB07</id>
        <label>MYG1</label>
    </interactant>
    <organismsDiffer>false</organismsDiffer>
    <experiments>3</experiments>
</comment>
<comment type="interaction">
    <interactant intactId="EBI-2872520">
        <id>Q9BSJ5</id>
    </interactant>
    <interactant intactId="EBI-473160">
        <id>Q8N2W9</id>
        <label>PIAS4</label>
    </interactant>
    <organismsDiffer>false</organismsDiffer>
    <experiments>3</experiments>
</comment>
<comment type="subcellular location">
    <subcellularLocation>
        <location evidence="6">Mitochondrion inner membrane</location>
        <topology evidence="13">Single-pass type I membrane protein</topology>
    </subcellularLocation>
    <subcellularLocation>
        <location evidence="6 7">Mitochondrion matrix</location>
        <location evidence="6 7">Mitochondrion nucleoid</location>
    </subcellularLocation>
    <text evidence="6">Retained in nucleoids under mtDNA replication stress caused by ddC and EtBr.</text>
</comment>
<comment type="alternative products">
    <event type="alternative splicing"/>
    <isoform>
        <id>Q9BSJ5-1</id>
        <name>1</name>
        <sequence type="displayed"/>
    </isoform>
    <isoform>
        <id>Q9BSJ5-2</id>
        <name>2</name>
        <sequence type="described" ref="VSP_024572"/>
    </isoform>
    <isoform>
        <id>Q9BSJ5-3</id>
        <name>3</name>
        <sequence type="described" ref="VSP_024573 VSP_024574"/>
    </isoform>
</comment>
<comment type="sequence caution" evidence="13">
    <conflict type="erroneous initiation">
        <sequence resource="EMBL-CDS" id="AAP72185"/>
    </conflict>
    <text>Truncated N-terminus.</text>
</comment>
<comment type="sequence caution" evidence="13">
    <conflict type="frameshift">
        <sequence resource="EMBL-CDS" id="BAA91344"/>
    </conflict>
</comment>
<comment type="sequence caution" evidence="13">
    <conflict type="erroneous initiation">
        <sequence resource="EMBL-CDS" id="BAB15680"/>
    </conflict>
    <text>Truncated N-terminus.</text>
</comment>
<organism>
    <name type="scientific">Homo sapiens</name>
    <name type="common">Human</name>
    <dbReference type="NCBI Taxonomy" id="9606"/>
    <lineage>
        <taxon>Eukaryota</taxon>
        <taxon>Metazoa</taxon>
        <taxon>Chordata</taxon>
        <taxon>Craniata</taxon>
        <taxon>Vertebrata</taxon>
        <taxon>Euteleostomi</taxon>
        <taxon>Mammalia</taxon>
        <taxon>Eutheria</taxon>
        <taxon>Euarchontoglires</taxon>
        <taxon>Primates</taxon>
        <taxon>Haplorrhini</taxon>
        <taxon>Catarrhini</taxon>
        <taxon>Hominidae</taxon>
        <taxon>Homo</taxon>
    </lineage>
</organism>
<feature type="chain" id="PRO_0000284612" description="Mitochondrial nucleoid-associated protein 1">
    <location>
        <begin position="1"/>
        <end position="609"/>
    </location>
</feature>
<feature type="topological domain" description="Mitochondrial matrix" evidence="6">
    <location>
        <begin position="1"/>
        <end position="552"/>
    </location>
</feature>
<feature type="transmembrane region" description="Helical" evidence="1">
    <location>
        <begin position="553"/>
        <end position="573"/>
    </location>
</feature>
<feature type="topological domain" description="Mitochondrial intermembrane" evidence="6">
    <location>
        <begin position="574"/>
        <end position="609"/>
    </location>
</feature>
<feature type="region of interest" description="Disordered" evidence="2">
    <location>
        <begin position="142"/>
        <end position="168"/>
    </location>
</feature>
<feature type="region of interest" description="Disordered" evidence="2">
    <location>
        <begin position="183"/>
        <end position="202"/>
    </location>
</feature>
<feature type="region of interest" description="Disordered" evidence="2">
    <location>
        <begin position="410"/>
        <end position="441"/>
    </location>
</feature>
<feature type="compositionally biased region" description="Basic and acidic residues" evidence="2">
    <location>
        <begin position="146"/>
        <end position="161"/>
    </location>
</feature>
<feature type="compositionally biased region" description="Polar residues" evidence="2">
    <location>
        <begin position="418"/>
        <end position="441"/>
    </location>
</feature>
<feature type="splice variant" id="VSP_024572" description="In isoform 2." evidence="10 11 12">
    <location>
        <begin position="505"/>
        <end position="540"/>
    </location>
</feature>
<feature type="splice variant" id="VSP_024573" description="In isoform 3." evidence="11">
    <original>KLCRPL</original>
    <variation>LQRWRK</variation>
    <location>
        <begin position="578"/>
        <end position="583"/>
    </location>
</feature>
<feature type="splice variant" id="VSP_024574" description="In isoform 3." evidence="11">
    <location>
        <begin position="584"/>
        <end position="609"/>
    </location>
</feature>
<feature type="sequence variant" id="VAR_031779" description="In dbSNP:rs9902726.">
    <original>G</original>
    <variation>S</variation>
    <location>
        <position position="226"/>
    </location>
</feature>
<feature type="sequence variant" id="VAR_031780" description="In dbSNP:rs34784472.">
    <original>K</original>
    <variation>Q</variation>
    <location>
        <position position="322"/>
    </location>
</feature>
<feature type="sequence variant" id="VAR_031781" description="In dbSNP:rs745143." evidence="8">
    <original>F</original>
    <variation>L</variation>
    <location>
        <position position="356"/>
    </location>
</feature>
<feature type="sequence variant" id="VAR_031782" description="In dbSNP:rs904384." evidence="3 4 5 8 9">
    <original>H</original>
    <variation>N</variation>
    <location>
        <position position="395"/>
    </location>
</feature>
<feature type="sequence variant" id="VAR_031783" description="In dbSNP:rs904383." evidence="8">
    <original>C</original>
    <variation>R</variation>
    <location>
        <position position="396"/>
    </location>
</feature>
<feature type="sequence variant" id="VAR_031784" description="In dbSNP:rs745142." evidence="4 8">
    <original>Q</original>
    <variation>H</variation>
    <location>
        <position position="420"/>
    </location>
</feature>
<feature type="sequence variant" id="VAR_031785" description="In dbSNP:rs1566286." evidence="4 8">
    <original>A</original>
    <variation>T</variation>
    <location>
        <position position="522"/>
    </location>
</feature>
<feature type="sequence conflict" description="In Ref. 2; CAB66674." evidence="13" ref="2">
    <original>P</original>
    <variation>S</variation>
    <location>
        <position position="33"/>
    </location>
</feature>
<feature type="sequence conflict" description="In Ref. 4; BAB15680." evidence="13" ref="4">
    <original>C</original>
    <variation>R</variation>
    <location>
        <position position="484"/>
    </location>
</feature>
<feature type="sequence conflict" description="In Ref. 4; BAA91344." evidence="13" ref="4">
    <original>G</original>
    <variation>R</variation>
    <location>
        <position position="536"/>
    </location>
</feature>
<sequence>MSDNPPRMEVCPYCKKPFKRLKSHLPYCKMIGPTIPTDQKVYQSKPATLPRAKKMKGPIKDLIKAKGKELETENEERNSKLVVDKPEQTVKTFPLPAVGLERAATTKADKDIKNPIQPSFKMLKNTKPMTTFQEETKAQFYASEKTSPKRELAKDLPKSGESRCNPSEAGASLLVGSIEPSLSNQDRKYSSTLPNDVQTTSGDLKLDKIDPQRQELLVKLLDVPTGDCHISPKNVSDGVKRVRTLLSNERDSKGRDHLSGVPTDVTVTETPEKNTESLILSLKMSSLGKIQVMEKQEKGLTLGVETCGSKGNAEKSMSATEKQERTVMSHGCENFNTRDSVTGKESQGERPHLSLFIPRETTYQFHSVSQSSSQSLASLATTFLQEKKAEAQNHHCVPDVKALMESPEGQLSLEPKSDSQFQASHTGCQSPLCSAQRHTPQSPFTNHAAAAGRKTLRSCMGLEWFPELYPGYLGLGVLPGKPQCWNAMTQKPQLISPQGERLSQVSLLERSSTHIRSLEPPAGLTTSNFSLMRLLGAVQKGWIRCNTTIRKSGFGGITMLFTGYFVLCCSWSFRRLKKLCRPLPWKSTVPPCIGVAKTTGDCRSKTCLD</sequence>
<proteinExistence type="evidence at protein level"/>
<name>CQ080_HUMAN</name>
<keyword id="KW-0025">Alternative splicing</keyword>
<keyword id="KW-0472">Membrane</keyword>
<keyword id="KW-0496">Mitochondrion</keyword>
<keyword id="KW-0999">Mitochondrion inner membrane</keyword>
<keyword id="KW-1135">Mitochondrion nucleoid</keyword>
<keyword id="KW-1267">Proteomics identification</keyword>
<keyword id="KW-1185">Reference proteome</keyword>
<keyword id="KW-0812">Transmembrane</keyword>
<keyword id="KW-1133">Transmembrane helix</keyword>
<evidence type="ECO:0000255" key="1"/>
<evidence type="ECO:0000256" key="2">
    <source>
        <dbReference type="SAM" id="MobiDB-lite"/>
    </source>
</evidence>
<evidence type="ECO:0000269" key="3">
    <source>
    </source>
</evidence>
<evidence type="ECO:0000269" key="4">
    <source>
    </source>
</evidence>
<evidence type="ECO:0000269" key="5">
    <source>
    </source>
</evidence>
<evidence type="ECO:0000269" key="6">
    <source>
    </source>
</evidence>
<evidence type="ECO:0000269" key="7">
    <source>
    </source>
</evidence>
<evidence type="ECO:0000269" key="8">
    <source ref="1"/>
</evidence>
<evidence type="ECO:0000269" key="9">
    <source ref="5"/>
</evidence>
<evidence type="ECO:0000303" key="10">
    <source>
    </source>
</evidence>
<evidence type="ECO:0000303" key="11">
    <source>
    </source>
</evidence>
<evidence type="ECO:0000303" key="12">
    <source ref="1"/>
</evidence>
<evidence type="ECO:0000305" key="13"/>
<evidence type="ECO:0000312" key="14">
    <source>
        <dbReference type="HGNC" id="HGNC:29601"/>
    </source>
</evidence>
<protein>
    <recommendedName>
        <fullName>Mitochondrial nucleoid-associated protein 1</fullName>
    </recommendedName>
    <alternativeName>
        <fullName>Cell migration-inducing gene 3 protein</fullName>
    </alternativeName>
    <alternativeName>
        <fullName>Human lung cancer oncogene 8 protein</fullName>
        <shortName>HLC-8</shortName>
    </alternativeName>
    <alternativeName>
        <fullName>Protein C17orf80</fullName>
    </alternativeName>
</protein>
<gene>
    <name evidence="14" type="primary">MTNAP1</name>
    <name type="ORF">C17orf80</name>
    <name type="ORF">HLC8</name>
    <name type="ORF">MIG3</name>
</gene>
<dbReference type="EMBL" id="AY163812">
    <property type="protein sequence ID" value="AAO25513.1"/>
    <property type="molecule type" value="mRNA"/>
</dbReference>
<dbReference type="EMBL" id="AY239293">
    <property type="protein sequence ID" value="AAP72185.1"/>
    <property type="status" value="ALT_INIT"/>
    <property type="molecule type" value="mRNA"/>
</dbReference>
<dbReference type="EMBL" id="AL136740">
    <property type="protein sequence ID" value="CAB66674.1"/>
    <property type="molecule type" value="mRNA"/>
</dbReference>
<dbReference type="EMBL" id="AK000728">
    <property type="protein sequence ID" value="BAA91344.1"/>
    <property type="status" value="ALT_FRAME"/>
    <property type="molecule type" value="mRNA"/>
</dbReference>
<dbReference type="EMBL" id="AK027166">
    <property type="protein sequence ID" value="BAB15680.1"/>
    <property type="status" value="ALT_INIT"/>
    <property type="molecule type" value="mRNA"/>
</dbReference>
<dbReference type="EMBL" id="AK292838">
    <property type="protein sequence ID" value="BAF85527.1"/>
    <property type="molecule type" value="mRNA"/>
</dbReference>
<dbReference type="EMBL" id="AC087301">
    <property type="status" value="NOT_ANNOTATED_CDS"/>
    <property type="molecule type" value="Genomic_DNA"/>
</dbReference>
<dbReference type="EMBL" id="AC097641">
    <property type="status" value="NOT_ANNOTATED_CDS"/>
    <property type="molecule type" value="Genomic_DNA"/>
</dbReference>
<dbReference type="EMBL" id="CH471099">
    <property type="protein sequence ID" value="EAW89118.1"/>
    <property type="molecule type" value="Genomic_DNA"/>
</dbReference>
<dbReference type="EMBL" id="BC005005">
    <property type="protein sequence ID" value="AAH05005.1"/>
    <property type="molecule type" value="mRNA"/>
</dbReference>
<dbReference type="CCDS" id="CCDS11694.1">
    <molecule id="Q9BSJ5-1"/>
</dbReference>
<dbReference type="CCDS" id="CCDS42377.1">
    <molecule id="Q9BSJ5-2"/>
</dbReference>
<dbReference type="CCDS" id="CCDS45767.1">
    <molecule id="Q9BSJ5-3"/>
</dbReference>
<dbReference type="RefSeq" id="NP_001094091.2">
    <molecule id="Q9BSJ5-2"/>
    <property type="nucleotide sequence ID" value="NM_001100621.3"/>
</dbReference>
<dbReference type="RefSeq" id="NP_001094092.2">
    <molecule id="Q9BSJ5-3"/>
    <property type="nucleotide sequence ID" value="NM_001100622.4"/>
</dbReference>
<dbReference type="RefSeq" id="NP_001275699.2">
    <molecule id="Q9BSJ5-2"/>
    <property type="nucleotide sequence ID" value="NM_001288770.3"/>
</dbReference>
<dbReference type="RefSeq" id="NP_001338193.2">
    <molecule id="Q9BSJ5-1"/>
    <property type="nucleotide sequence ID" value="NM_001351264.2"/>
</dbReference>
<dbReference type="RefSeq" id="NP_001338194.2">
    <molecule id="Q9BSJ5-2"/>
    <property type="nucleotide sequence ID" value="NM_001351265.2"/>
</dbReference>
<dbReference type="RefSeq" id="NP_001373907.1">
    <molecule id="Q9BSJ5-3"/>
    <property type="nucleotide sequence ID" value="NM_001386978.1"/>
</dbReference>
<dbReference type="RefSeq" id="NP_060411.2">
    <molecule id="Q9BSJ5-1"/>
    <property type="nucleotide sequence ID" value="NM_017941.5"/>
</dbReference>
<dbReference type="RefSeq" id="XP_005257544.1">
    <property type="nucleotide sequence ID" value="XM_005257487.3"/>
</dbReference>
<dbReference type="RefSeq" id="XP_011523263.1">
    <molecule id="Q9BSJ5-1"/>
    <property type="nucleotide sequence ID" value="XM_011524961.2"/>
</dbReference>
<dbReference type="RefSeq" id="XP_011523264.1">
    <molecule id="Q9BSJ5-1"/>
    <property type="nucleotide sequence ID" value="XM_011524962.3"/>
</dbReference>
<dbReference type="RefSeq" id="XP_016880295.1">
    <property type="nucleotide sequence ID" value="XM_017024806.1"/>
</dbReference>
<dbReference type="RefSeq" id="XP_047292293.1">
    <molecule id="Q9BSJ5-1"/>
    <property type="nucleotide sequence ID" value="XM_047436337.1"/>
</dbReference>
<dbReference type="BioGRID" id="120358">
    <property type="interactions" value="267"/>
</dbReference>
<dbReference type="FunCoup" id="Q9BSJ5">
    <property type="interactions" value="810"/>
</dbReference>
<dbReference type="IntAct" id="Q9BSJ5">
    <property type="interactions" value="58"/>
</dbReference>
<dbReference type="MINT" id="Q9BSJ5"/>
<dbReference type="STRING" id="9606.ENSP00000351937"/>
<dbReference type="GlyGen" id="Q9BSJ5">
    <property type="glycosylation" value="1 site"/>
</dbReference>
<dbReference type="iPTMnet" id="Q9BSJ5"/>
<dbReference type="MetOSite" id="Q9BSJ5"/>
<dbReference type="PhosphoSitePlus" id="Q9BSJ5"/>
<dbReference type="SwissPalm" id="Q9BSJ5"/>
<dbReference type="BioMuta" id="C17orf80"/>
<dbReference type="DMDM" id="317373351"/>
<dbReference type="jPOST" id="Q9BSJ5"/>
<dbReference type="MassIVE" id="Q9BSJ5"/>
<dbReference type="PaxDb" id="9606-ENSP00000351937"/>
<dbReference type="PeptideAtlas" id="Q9BSJ5"/>
<dbReference type="ProteomicsDB" id="78901">
    <molecule id="Q9BSJ5-1"/>
</dbReference>
<dbReference type="ProteomicsDB" id="78902">
    <molecule id="Q9BSJ5-2"/>
</dbReference>
<dbReference type="ProteomicsDB" id="78903">
    <molecule id="Q9BSJ5-3"/>
</dbReference>
<dbReference type="Pumba" id="Q9BSJ5"/>
<dbReference type="Antibodypedia" id="2478">
    <property type="antibodies" value="76 antibodies from 17 providers"/>
</dbReference>
<dbReference type="DNASU" id="55028"/>
<dbReference type="Ensembl" id="ENST00000268942.12">
    <molecule id="Q9BSJ5-2"/>
    <property type="protein sequence ID" value="ENSP00000268942.8"/>
    <property type="gene ID" value="ENSG00000141219.16"/>
</dbReference>
<dbReference type="Ensembl" id="ENST00000359042.6">
    <molecule id="Q9BSJ5-1"/>
    <property type="protein sequence ID" value="ENSP00000351937.2"/>
    <property type="gene ID" value="ENSG00000141219.16"/>
</dbReference>
<dbReference type="Ensembl" id="ENST00000426147.6">
    <molecule id="Q9BSJ5-3"/>
    <property type="protein sequence ID" value="ENSP00000396970.2"/>
    <property type="gene ID" value="ENSG00000141219.16"/>
</dbReference>
<dbReference type="Ensembl" id="ENST00000535032.7">
    <molecule id="Q9BSJ5-1"/>
    <property type="protein sequence ID" value="ENSP00000440551.2"/>
    <property type="gene ID" value="ENSG00000141219.16"/>
</dbReference>
<dbReference type="Ensembl" id="ENST00000577615.5">
    <molecule id="Q9BSJ5-2"/>
    <property type="protein sequence ID" value="ENSP00000464132.1"/>
    <property type="gene ID" value="ENSG00000141219.16"/>
</dbReference>
<dbReference type="GeneID" id="55028"/>
<dbReference type="KEGG" id="hsa:55028"/>
<dbReference type="MANE-Select" id="ENST00000535032.7">
    <property type="protein sequence ID" value="ENSP00000440551.2"/>
    <property type="RefSeq nucleotide sequence ID" value="NM_001351264.2"/>
    <property type="RefSeq protein sequence ID" value="NP_001338193.2"/>
</dbReference>
<dbReference type="UCSC" id="uc002jjk.3">
    <molecule id="Q9BSJ5-1"/>
    <property type="organism name" value="human"/>
</dbReference>
<dbReference type="AGR" id="HGNC:29601"/>
<dbReference type="CTD" id="55028"/>
<dbReference type="DisGeNET" id="55028"/>
<dbReference type="GeneCards" id="MTNAP1"/>
<dbReference type="HGNC" id="HGNC:29601">
    <property type="gene designation" value="MTNAP1"/>
</dbReference>
<dbReference type="HPA" id="ENSG00000141219">
    <property type="expression patterns" value="Low tissue specificity"/>
</dbReference>
<dbReference type="MIM" id="620717">
    <property type="type" value="gene"/>
</dbReference>
<dbReference type="neXtProt" id="NX_Q9BSJ5"/>
<dbReference type="OpenTargets" id="ENSG00000141219"/>
<dbReference type="PharmGKB" id="PA143485404"/>
<dbReference type="VEuPathDB" id="HostDB:ENSG00000141219"/>
<dbReference type="eggNOG" id="KOG4092">
    <property type="taxonomic scope" value="Eukaryota"/>
</dbReference>
<dbReference type="GeneTree" id="ENSGT00510000049019"/>
<dbReference type="HOGENOM" id="CLU_037702_0_0_1"/>
<dbReference type="InParanoid" id="Q9BSJ5"/>
<dbReference type="OMA" id="VHTGWIR"/>
<dbReference type="OrthoDB" id="8921675at2759"/>
<dbReference type="PAN-GO" id="Q9BSJ5">
    <property type="GO annotations" value="0 GO annotations based on evolutionary models"/>
</dbReference>
<dbReference type="PhylomeDB" id="Q9BSJ5"/>
<dbReference type="TreeFam" id="TF324369"/>
<dbReference type="PathwayCommons" id="Q9BSJ5"/>
<dbReference type="SignaLink" id="Q9BSJ5"/>
<dbReference type="BioGRID-ORCS" id="55028">
    <property type="hits" value="20 hits in 1140 CRISPR screens"/>
</dbReference>
<dbReference type="ChiTaRS" id="C17orf80">
    <property type="organism name" value="human"/>
</dbReference>
<dbReference type="GenomeRNAi" id="55028"/>
<dbReference type="Pharos" id="Q9BSJ5">
    <property type="development level" value="Tbio"/>
</dbReference>
<dbReference type="PRO" id="PR:Q9BSJ5"/>
<dbReference type="Proteomes" id="UP000005640">
    <property type="component" value="Chromosome 17"/>
</dbReference>
<dbReference type="RNAct" id="Q9BSJ5">
    <property type="molecule type" value="protein"/>
</dbReference>
<dbReference type="Bgee" id="ENSG00000141219">
    <property type="expression patterns" value="Expressed in sperm and 173 other cell types or tissues"/>
</dbReference>
<dbReference type="ExpressionAtlas" id="Q9BSJ5">
    <property type="expression patterns" value="baseline and differential"/>
</dbReference>
<dbReference type="GO" id="GO:0070062">
    <property type="term" value="C:extracellular exosome"/>
    <property type="evidence" value="ECO:0007005"/>
    <property type="project" value="UniProtKB"/>
</dbReference>
<dbReference type="GO" id="GO:0005743">
    <property type="term" value="C:mitochondrial inner membrane"/>
    <property type="evidence" value="ECO:0007669"/>
    <property type="project" value="UniProtKB-SubCell"/>
</dbReference>
<dbReference type="GO" id="GO:0042645">
    <property type="term" value="C:mitochondrial nucleoid"/>
    <property type="evidence" value="ECO:0000314"/>
    <property type="project" value="UniProtKB"/>
</dbReference>
<dbReference type="GO" id="GO:0005739">
    <property type="term" value="C:mitochondrion"/>
    <property type="evidence" value="ECO:0006056"/>
    <property type="project" value="FlyBase"/>
</dbReference>
<dbReference type="InterPro" id="IPR037694">
    <property type="entry name" value="MTNAP1"/>
</dbReference>
<dbReference type="PANTHER" id="PTHR16270">
    <property type="entry name" value="HYPOTHETICAL LOC287798"/>
    <property type="match status" value="1"/>
</dbReference>
<dbReference type="PANTHER" id="PTHR16270:SF5">
    <property type="entry name" value="HYPOTHETICAL LOC287798"/>
    <property type="match status" value="1"/>
</dbReference>
<reference key="1">
    <citation type="submission" date="2002-10" db="EMBL/GenBank/DDBJ databases">
        <title>Identification of a new human cancer-related gene (HLC-8).</title>
        <authorList>
            <person name="Kim J.W."/>
        </authorList>
    </citation>
    <scope>NUCLEOTIDE SEQUENCE [LARGE SCALE MRNA] (ISOFORM 2)</scope>
    <scope>NUCLEOTIDE SEQUENCE [LARGE SCALE MRNA] OF 377-609 (ISOFORM 1)</scope>
    <scope>VARIANTS LEU-356; ASN-395; ARG-396; HIS-420 AND THR-522</scope>
</reference>
<reference key="2">
    <citation type="journal article" date="2001" name="Genome Res.">
        <title>Towards a catalog of human genes and proteins: sequencing and analysis of 500 novel complete protein coding human cDNAs.</title>
        <authorList>
            <person name="Wiemann S."/>
            <person name="Weil B."/>
            <person name="Wellenreuther R."/>
            <person name="Gassenhuber J."/>
            <person name="Glassl S."/>
            <person name="Ansorge W."/>
            <person name="Boecher M."/>
            <person name="Bloecker H."/>
            <person name="Bauersachs S."/>
            <person name="Blum H."/>
            <person name="Lauber J."/>
            <person name="Duesterhoeft A."/>
            <person name="Beyer A."/>
            <person name="Koehrer K."/>
            <person name="Strack N."/>
            <person name="Mewes H.-W."/>
            <person name="Ottenwaelder B."/>
            <person name="Obermaier B."/>
            <person name="Tampe J."/>
            <person name="Heubner D."/>
            <person name="Wambutt R."/>
            <person name="Korn B."/>
            <person name="Klein M."/>
            <person name="Poustka A."/>
        </authorList>
    </citation>
    <scope>NUCLEOTIDE SEQUENCE [LARGE SCALE MRNA] (ISOFORM 2)</scope>
    <scope>VARIANT ASN-395</scope>
    <source>
        <tissue>Testis</tissue>
    </source>
</reference>
<reference key="3">
    <citation type="journal article" date="2004" name="Nat. Genet.">
        <title>Complete sequencing and characterization of 21,243 full-length human cDNAs.</title>
        <authorList>
            <person name="Ota T."/>
            <person name="Suzuki Y."/>
            <person name="Nishikawa T."/>
            <person name="Otsuki T."/>
            <person name="Sugiyama T."/>
            <person name="Irie R."/>
            <person name="Wakamatsu A."/>
            <person name="Hayashi K."/>
            <person name="Sato H."/>
            <person name="Nagai K."/>
            <person name="Kimura K."/>
            <person name="Makita H."/>
            <person name="Sekine M."/>
            <person name="Obayashi M."/>
            <person name="Nishi T."/>
            <person name="Shibahara T."/>
            <person name="Tanaka T."/>
            <person name="Ishii S."/>
            <person name="Yamamoto J."/>
            <person name="Saito K."/>
            <person name="Kawai Y."/>
            <person name="Isono Y."/>
            <person name="Nakamura Y."/>
            <person name="Nagahari K."/>
            <person name="Murakami K."/>
            <person name="Yasuda T."/>
            <person name="Iwayanagi T."/>
            <person name="Wagatsuma M."/>
            <person name="Shiratori A."/>
            <person name="Sudo H."/>
            <person name="Hosoiri T."/>
            <person name="Kaku Y."/>
            <person name="Kodaira H."/>
            <person name="Kondo H."/>
            <person name="Sugawara M."/>
            <person name="Takahashi M."/>
            <person name="Kanda K."/>
            <person name="Yokoi T."/>
            <person name="Furuya T."/>
            <person name="Kikkawa E."/>
            <person name="Omura Y."/>
            <person name="Abe K."/>
            <person name="Kamihara K."/>
            <person name="Katsuta N."/>
            <person name="Sato K."/>
            <person name="Tanikawa M."/>
            <person name="Yamazaki M."/>
            <person name="Ninomiya K."/>
            <person name="Ishibashi T."/>
            <person name="Yamashita H."/>
            <person name="Murakawa K."/>
            <person name="Fujimori K."/>
            <person name="Tanai H."/>
            <person name="Kimata M."/>
            <person name="Watanabe M."/>
            <person name="Hiraoka S."/>
            <person name="Chiba Y."/>
            <person name="Ishida S."/>
            <person name="Ono Y."/>
            <person name="Takiguchi S."/>
            <person name="Watanabe S."/>
            <person name="Yosida M."/>
            <person name="Hotuta T."/>
            <person name="Kusano J."/>
            <person name="Kanehori K."/>
            <person name="Takahashi-Fujii A."/>
            <person name="Hara H."/>
            <person name="Tanase T.-O."/>
            <person name="Nomura Y."/>
            <person name="Togiya S."/>
            <person name="Komai F."/>
            <person name="Hara R."/>
            <person name="Takeuchi K."/>
            <person name="Arita M."/>
            <person name="Imose N."/>
            <person name="Musashino K."/>
            <person name="Yuuki H."/>
            <person name="Oshima A."/>
            <person name="Sasaki N."/>
            <person name="Aotsuka S."/>
            <person name="Yoshikawa Y."/>
            <person name="Matsunawa H."/>
            <person name="Ichihara T."/>
            <person name="Shiohata N."/>
            <person name="Sano S."/>
            <person name="Moriya S."/>
            <person name="Momiyama H."/>
            <person name="Satoh N."/>
            <person name="Takami S."/>
            <person name="Terashima Y."/>
            <person name="Suzuki O."/>
            <person name="Nakagawa S."/>
            <person name="Senoh A."/>
            <person name="Mizoguchi H."/>
            <person name="Goto Y."/>
            <person name="Shimizu F."/>
            <person name="Wakebe H."/>
            <person name="Hishigaki H."/>
            <person name="Watanabe T."/>
            <person name="Sugiyama A."/>
            <person name="Takemoto M."/>
            <person name="Kawakami B."/>
            <person name="Yamazaki M."/>
            <person name="Watanabe K."/>
            <person name="Kumagai A."/>
            <person name="Itakura S."/>
            <person name="Fukuzumi Y."/>
            <person name="Fujimori Y."/>
            <person name="Komiyama M."/>
            <person name="Tashiro H."/>
            <person name="Tanigami A."/>
            <person name="Fujiwara T."/>
            <person name="Ono T."/>
            <person name="Yamada K."/>
            <person name="Fujii Y."/>
            <person name="Ozaki K."/>
            <person name="Hirao M."/>
            <person name="Ohmori Y."/>
            <person name="Kawabata A."/>
            <person name="Hikiji T."/>
            <person name="Kobatake N."/>
            <person name="Inagaki H."/>
            <person name="Ikema Y."/>
            <person name="Okamoto S."/>
            <person name="Okitani R."/>
            <person name="Kawakami T."/>
            <person name="Noguchi S."/>
            <person name="Itoh T."/>
            <person name="Shigeta K."/>
            <person name="Senba T."/>
            <person name="Matsumura K."/>
            <person name="Nakajima Y."/>
            <person name="Mizuno T."/>
            <person name="Morinaga M."/>
            <person name="Sasaki M."/>
            <person name="Togashi T."/>
            <person name="Oyama M."/>
            <person name="Hata H."/>
            <person name="Watanabe M."/>
            <person name="Komatsu T."/>
            <person name="Mizushima-Sugano J."/>
            <person name="Satoh T."/>
            <person name="Shirai Y."/>
            <person name="Takahashi Y."/>
            <person name="Nakagawa K."/>
            <person name="Okumura K."/>
            <person name="Nagase T."/>
            <person name="Nomura N."/>
            <person name="Kikuchi H."/>
            <person name="Masuho Y."/>
            <person name="Yamashita R."/>
            <person name="Nakai K."/>
            <person name="Yada T."/>
            <person name="Nakamura Y."/>
            <person name="Ohara O."/>
            <person name="Isogai T."/>
            <person name="Sugano S."/>
        </authorList>
    </citation>
    <scope>NUCLEOTIDE SEQUENCE [LARGE SCALE MRNA] (ISOFORMS 2 AND 3)</scope>
    <scope>VARIANTS ASN-395; HIS-420 AND THR-522</scope>
    <source>
        <tissue>Lung</tissue>
        <tissue>Trachea</tissue>
    </source>
</reference>
<reference key="4">
    <citation type="journal article" date="2006" name="Nature">
        <title>DNA sequence of human chromosome 17 and analysis of rearrangement in the human lineage.</title>
        <authorList>
            <person name="Zody M.C."/>
            <person name="Garber M."/>
            <person name="Adams D.J."/>
            <person name="Sharpe T."/>
            <person name="Harrow J."/>
            <person name="Lupski J.R."/>
            <person name="Nicholson C."/>
            <person name="Searle S.M."/>
            <person name="Wilming L."/>
            <person name="Young S.K."/>
            <person name="Abouelleil A."/>
            <person name="Allen N.R."/>
            <person name="Bi W."/>
            <person name="Bloom T."/>
            <person name="Borowsky M.L."/>
            <person name="Bugalter B.E."/>
            <person name="Butler J."/>
            <person name="Chang J.L."/>
            <person name="Chen C.-K."/>
            <person name="Cook A."/>
            <person name="Corum B."/>
            <person name="Cuomo C.A."/>
            <person name="de Jong P.J."/>
            <person name="DeCaprio D."/>
            <person name="Dewar K."/>
            <person name="FitzGerald M."/>
            <person name="Gilbert J."/>
            <person name="Gibson R."/>
            <person name="Gnerre S."/>
            <person name="Goldstein S."/>
            <person name="Grafham D.V."/>
            <person name="Grocock R."/>
            <person name="Hafez N."/>
            <person name="Hagopian D.S."/>
            <person name="Hart E."/>
            <person name="Norman C.H."/>
            <person name="Humphray S."/>
            <person name="Jaffe D.B."/>
            <person name="Jones M."/>
            <person name="Kamal M."/>
            <person name="Khodiyar V.K."/>
            <person name="LaButti K."/>
            <person name="Laird G."/>
            <person name="Lehoczky J."/>
            <person name="Liu X."/>
            <person name="Lokyitsang T."/>
            <person name="Loveland J."/>
            <person name="Lui A."/>
            <person name="Macdonald P."/>
            <person name="Major J.E."/>
            <person name="Matthews L."/>
            <person name="Mauceli E."/>
            <person name="McCarroll S.A."/>
            <person name="Mihalev A.H."/>
            <person name="Mudge J."/>
            <person name="Nguyen C."/>
            <person name="Nicol R."/>
            <person name="O'Leary S.B."/>
            <person name="Osoegawa K."/>
            <person name="Schwartz D.C."/>
            <person name="Shaw-Smith C."/>
            <person name="Stankiewicz P."/>
            <person name="Steward C."/>
            <person name="Swarbreck D."/>
            <person name="Venkataraman V."/>
            <person name="Whittaker C.A."/>
            <person name="Yang X."/>
            <person name="Zimmer A.R."/>
            <person name="Bradley A."/>
            <person name="Hubbard T."/>
            <person name="Birren B.W."/>
            <person name="Rogers J."/>
            <person name="Lander E.S."/>
            <person name="Nusbaum C."/>
        </authorList>
    </citation>
    <scope>NUCLEOTIDE SEQUENCE [LARGE SCALE GENOMIC DNA]</scope>
</reference>
<reference key="5">
    <citation type="submission" date="2005-07" db="EMBL/GenBank/DDBJ databases">
        <authorList>
            <person name="Mural R.J."/>
            <person name="Istrail S."/>
            <person name="Sutton G.G."/>
            <person name="Florea L."/>
            <person name="Halpern A.L."/>
            <person name="Mobarry C.M."/>
            <person name="Lippert R."/>
            <person name="Walenz B."/>
            <person name="Shatkay H."/>
            <person name="Dew I."/>
            <person name="Miller J.R."/>
            <person name="Flanigan M.J."/>
            <person name="Edwards N.J."/>
            <person name="Bolanos R."/>
            <person name="Fasulo D."/>
            <person name="Halldorsson B.V."/>
            <person name="Hannenhalli S."/>
            <person name="Turner R."/>
            <person name="Yooseph S."/>
            <person name="Lu F."/>
            <person name="Nusskern D.R."/>
            <person name="Shue B.C."/>
            <person name="Zheng X.H."/>
            <person name="Zhong F."/>
            <person name="Delcher A.L."/>
            <person name="Huson D.H."/>
            <person name="Kravitz S.A."/>
            <person name="Mouchard L."/>
            <person name="Reinert K."/>
            <person name="Remington K.A."/>
            <person name="Clark A.G."/>
            <person name="Waterman M.S."/>
            <person name="Eichler E.E."/>
            <person name="Adams M.D."/>
            <person name="Hunkapiller M.W."/>
            <person name="Myers E.W."/>
            <person name="Venter J.C."/>
        </authorList>
    </citation>
    <scope>NUCLEOTIDE SEQUENCE [LARGE SCALE GENOMIC DNA]</scope>
    <scope>VARIANT ASN-395</scope>
</reference>
<reference key="6">
    <citation type="journal article" date="2004" name="Genome Res.">
        <title>The status, quality, and expansion of the NIH full-length cDNA project: the Mammalian Gene Collection (MGC).</title>
        <authorList>
            <consortium name="The MGC Project Team"/>
        </authorList>
    </citation>
    <scope>NUCLEOTIDE SEQUENCE [LARGE SCALE MRNA] (ISOFORM 1)</scope>
    <scope>VARIANT ASN-395</scope>
    <source>
        <tissue>Kidney</tissue>
    </source>
</reference>
<reference key="7">
    <citation type="journal article" date="2023" name="J. Cell Sci.">
        <title>Uncharacterized protein C17orf80 - a novel interactor of human mitochondrial nucleoids.</title>
        <authorList>
            <person name="Potter A."/>
            <person name="Hangas A."/>
            <person name="Goffart S."/>
            <person name="Huynen M.A."/>
            <person name="Cabrera-Orefice A."/>
            <person name="Spelbrink J.N."/>
        </authorList>
    </citation>
    <scope>SUBCELLULAR LOCATION</scope>
    <scope>TOPOLOGY</scope>
</reference>
<reference key="8">
    <citation type="journal article" date="2023" name="J. Cell Biol.">
        <title>C17orf80 binds the mitochondrial genome to promote its replication.</title>
        <authorList>
            <person name="Wu H."/>
            <person name="Zhang W."/>
            <person name="Xu F."/>
            <person name="Peng K."/>
            <person name="Liu X."/>
            <person name="Ding W."/>
            <person name="Ma Q."/>
            <person name="Cheng H."/>
            <person name="Wang X."/>
        </authorList>
    </citation>
    <scope>FUNCTION</scope>
    <scope>SUBCELLULAR LOCATION</scope>
</reference>